<gene>
    <name type="primary">NA</name>
</gene>
<proteinExistence type="inferred from homology"/>
<dbReference type="EC" id="3.2.1.18"/>
<dbReference type="EMBL" id="V01097">
    <property type="protein sequence ID" value="CAA24280.1"/>
    <property type="molecule type" value="Unassigned_RNA"/>
</dbReference>
<dbReference type="EMBL" id="K01002">
    <property type="protein sequence ID" value="AAA43359.1"/>
    <property type="molecule type" value="Genomic_RNA"/>
</dbReference>
<dbReference type="SMR" id="P03481"/>
<dbReference type="CAZy" id="GH34">
    <property type="family name" value="Glycoside Hydrolase Family 34"/>
</dbReference>
<dbReference type="GlyCosmos" id="P03481">
    <property type="glycosylation" value="3 sites, No reported glycans"/>
</dbReference>
<dbReference type="GO" id="GO:0020002">
    <property type="term" value="C:host cell plasma membrane"/>
    <property type="evidence" value="ECO:0007669"/>
    <property type="project" value="UniProtKB-SubCell"/>
</dbReference>
<dbReference type="GO" id="GO:0016020">
    <property type="term" value="C:membrane"/>
    <property type="evidence" value="ECO:0007669"/>
    <property type="project" value="UniProtKB-KW"/>
</dbReference>
<dbReference type="GO" id="GO:0055036">
    <property type="term" value="C:virion membrane"/>
    <property type="evidence" value="ECO:0007669"/>
    <property type="project" value="UniProtKB-SubCell"/>
</dbReference>
<dbReference type="GO" id="GO:0004308">
    <property type="term" value="F:exo-alpha-sialidase activity"/>
    <property type="evidence" value="ECO:0007669"/>
    <property type="project" value="UniProtKB-EC"/>
</dbReference>
<dbReference type="GO" id="GO:0046872">
    <property type="term" value="F:metal ion binding"/>
    <property type="evidence" value="ECO:0007669"/>
    <property type="project" value="UniProtKB-KW"/>
</dbReference>
<organism>
    <name type="scientific">Influenza A virus (strain A/Black duck/Australia/702/1978 H3N8)</name>
    <dbReference type="NCBI Taxonomy" id="385637"/>
    <lineage>
        <taxon>Viruses</taxon>
        <taxon>Riboviria</taxon>
        <taxon>Orthornavirae</taxon>
        <taxon>Negarnaviricota</taxon>
        <taxon>Polyploviricotina</taxon>
        <taxon>Insthoviricetes</taxon>
        <taxon>Articulavirales</taxon>
        <taxon>Orthomyxoviridae</taxon>
        <taxon>Alphainfluenzavirus</taxon>
        <taxon>Alphainfluenzavirus influenzae</taxon>
        <taxon>Influenza A virus</taxon>
    </lineage>
</organism>
<name>NRAM_I78A0</name>
<keyword id="KW-0106">Calcium</keyword>
<keyword id="KW-0325">Glycoprotein</keyword>
<keyword id="KW-0326">Glycosidase</keyword>
<keyword id="KW-1032">Host cell membrane</keyword>
<keyword id="KW-1043">Host membrane</keyword>
<keyword id="KW-0378">Hydrolase</keyword>
<keyword id="KW-0472">Membrane</keyword>
<keyword id="KW-0479">Metal-binding</keyword>
<keyword id="KW-0735">Signal-anchor</keyword>
<keyword id="KW-0812">Transmembrane</keyword>
<keyword id="KW-1133">Transmembrane helix</keyword>
<keyword id="KW-0946">Virion</keyword>
<accession>P03481</accession>
<sequence length="102" mass="11626">MNPNQKIITIGSVSLGLVCLDILLHIISITITVLGLHKNGKQRRCNETVIREDNETVRIEKVTQWHNTNVIEYIEKLEGDHFMNNTEPLCHAKGFALFSKDN</sequence>
<feature type="chain" id="PRO_0000078677" description="Neuraminidase">
    <location>
        <begin position="1"/>
        <end position="102" status="greater than"/>
    </location>
</feature>
<feature type="topological domain" description="Intravirion" evidence="2">
    <location>
        <begin position="1"/>
        <end position="6"/>
    </location>
</feature>
<feature type="transmembrane region" description="Helical; Signal-anchor for type II membrane protein" evidence="2">
    <location>
        <begin position="7"/>
        <end position="35"/>
    </location>
</feature>
<feature type="topological domain" description="Virion surface" evidence="2">
    <location>
        <begin position="36"/>
        <end position="102" status="greater than"/>
    </location>
</feature>
<feature type="region of interest" description="Involved in apical transport and lipid raft association" evidence="1">
    <location>
        <begin position="11"/>
        <end position="33"/>
    </location>
</feature>
<feature type="region of interest" description="Hypervariable stalk region">
    <location>
        <begin position="37"/>
        <end position="88"/>
    </location>
</feature>
<feature type="region of interest" description="Head of neuraminidase">
    <location>
        <begin position="89"/>
        <end position="102" status="greater than"/>
    </location>
</feature>
<feature type="glycosylation site" description="N-linked (GlcNAc...) asparagine; by host" evidence="2">
    <location>
        <position position="46"/>
    </location>
</feature>
<feature type="glycosylation site" description="N-linked (GlcNAc...) asparagine; by host" evidence="2">
    <location>
        <position position="54"/>
    </location>
</feature>
<feature type="glycosylation site" description="N-linked (GlcNAc...) asparagine; by host" evidence="2">
    <location>
        <position position="84"/>
    </location>
</feature>
<feature type="non-terminal residue">
    <location>
        <position position="102"/>
    </location>
</feature>
<protein>
    <recommendedName>
        <fullName>Neuraminidase</fullName>
        <ecNumber>3.2.1.18</ecNumber>
    </recommendedName>
</protein>
<evidence type="ECO:0000250" key="1"/>
<evidence type="ECO:0000255" key="2"/>
<evidence type="ECO:0000305" key="3"/>
<reference key="1">
    <citation type="journal article" date="1982" name="Biochemistry">
        <title>Variation in the membrane-insertion and 'stalk' sequences in eight subtypes of influenza type A virus neuraminidase.</title>
        <authorList>
            <person name="Blok J."/>
            <person name="Air G.M."/>
        </authorList>
    </citation>
    <scope>NUCLEOTIDE SEQUENCE [GENOMIC RNA]</scope>
</reference>
<reference key="2">
    <citation type="journal article" date="1982" name="Virology">
        <title>Sequence variation at the 3' end of the neuraminidase gene from 39 influenza type A viruses.</title>
        <authorList>
            <person name="Blok J."/>
            <person name="Air G.M."/>
        </authorList>
    </citation>
    <scope>NUCLEOTIDE SEQUENCE</scope>
</reference>
<reference key="3">
    <citation type="journal article" date="2004" name="Virus Res.">
        <title>Assembly and budding of influenza virus.</title>
        <authorList>
            <person name="Nayak D.P."/>
            <person name="Hui E.K."/>
            <person name="Barman S."/>
        </authorList>
    </citation>
    <scope>REVIEW</scope>
</reference>
<reference key="4">
    <citation type="journal article" date="2005" name="N. Engl. J. Med.">
        <title>Neuraminidase inhibitors for influenza.</title>
        <authorList>
            <person name="Moscona A."/>
        </authorList>
    </citation>
    <scope>REVIEW</scope>
</reference>
<reference key="5">
    <citation type="journal article" date="2005" name="Biol. Pharm. Bull.">
        <title>Sialobiology of influenza: molecular mechanism of host range variation of influenza viruses.</title>
        <authorList>
            <person name="Suzuki Y."/>
        </authorList>
    </citation>
    <scope>REVIEW</scope>
</reference>
<comment type="function">
    <text>Catalyzes the removal of terminal sialic acid residues from viral and cellular glycoconjugates. Cleaves off the terminal sialic acids on the glycosylated HA during virus budding to facilitate virus release. Additionally helps virus spread through the circulation by further removing sialic acids from the cell surface. These cleavages prevent self-aggregation and ensure the efficient spread of the progeny virus from cell to cell. Otherwise, infection would be limited to one round of replication. Described as a receptor-destroying enzyme because it cleaves a terminal sialic acid from the cellular receptors. May facilitate viral invasion of the upper airways by cleaving the sialic acid moieties on the mucin of the airway epithelial cells. Likely to plays a role in the budding process through its association with lipid rafts during intracellular transport. May additionally display a raft-association independent effect on budding. Plays a role in the determination of host range restriction on replication and virulence. Sialidase activity in late endosome/lysosome traffic seems to enhance virus replication.</text>
</comment>
<comment type="catalytic activity">
    <reaction>
        <text>Hydrolysis of alpha-(2-&gt;3)-, alpha-(2-&gt;6)-, alpha-(2-&gt;8)- glycosidic linkages of terminal sialic acid residues in oligosaccharides, glycoproteins, glycolipids, colominic acid and synthetic substrates.</text>
        <dbReference type="EC" id="3.2.1.18"/>
    </reaction>
</comment>
<comment type="cofactor">
    <cofactor evidence="1">
        <name>Ca(2+)</name>
        <dbReference type="ChEBI" id="CHEBI:29108"/>
    </cofactor>
    <text evidence="1">Binds 1 Ca(2+) ion.</text>
</comment>
<comment type="activity regulation">
    <text>Inhibited by the neuraminidase inhibitors zanamivir (Relenza) and oseltamivir (Tamiflu). These drugs interfere with the release of progeny virus from infected cells and are effective against all influenza strains. Resistance to neuraminidase inhibitors is quite rare.</text>
</comment>
<comment type="subunit">
    <text evidence="1">Homotetramer.</text>
</comment>
<comment type="subcellular location">
    <subcellularLocation>
        <location evidence="1">Virion membrane</location>
    </subcellularLocation>
    <subcellularLocation>
        <location evidence="1">Host apical cell membrane</location>
        <topology evidence="1">Single-pass type II membrane protein</topology>
    </subcellularLocation>
    <text evidence="1">Preferentially accumulates at the apical plasma membrane in infected polarized epithelial cells, which is the virus assembly site. Uses lipid rafts for cell surface transport and apical sorting. In the virion, forms a mushroom-shaped spike on the surface of the membrane (By similarity).</text>
</comment>
<comment type="domain">
    <text evidence="1">Intact N-terminus is essential for virion morphogenesis. Possesses two apical sorting signals, one in the ectodomain, which is likely to be a glycan, and the other in the transmembrane domain. The transmembrane domain also plays a role in lipid raft association (By similarity).</text>
</comment>
<comment type="PTM">
    <text evidence="1">N-glycosylated.</text>
</comment>
<comment type="miscellaneous">
    <text>The influenza A genome consist of 8 RNA segments. Genetic variation of hemagglutinin and/or neuraminidase genes results in the emergence of new influenza strains. The mechanism of variation can be the result of point mutations or the result of genetic reassortment between segments of two different strains.</text>
</comment>
<comment type="similarity">
    <text evidence="3">Belongs to the glycosyl hydrolase 34 family.</text>
</comment>
<organismHost>
    <name type="scientific">Aves</name>
    <dbReference type="NCBI Taxonomy" id="8782"/>
</organismHost>